<protein>
    <recommendedName>
        <fullName evidence="1">Succinate dehydrogenase assembly factor 2, mitochondrial</fullName>
        <shortName evidence="1">SDH assembly factor 2</shortName>
        <shortName evidence="1">SDHAF2</shortName>
    </recommendedName>
</protein>
<comment type="function">
    <text evidence="1">Plays an essential role in the assembly of succinate dehydrogenase (SDH), an enzyme complex (also referred to as respiratory complex II) that is a component of both the tricarboxylic acid (TCA) cycle and the mitochondrial electron transport chain, and which couples the oxidation of succinate to fumarate with the reduction of ubiquinone (coenzyme Q) to ubiquinol. Required for flavinylation (covalent attachment of FAD) of the flavoprotein subunit of the SDH catalytic dimer.</text>
</comment>
<comment type="subunit">
    <text evidence="1">Interacts with the flavoprotein subunit within the SDH catalytic dimer.</text>
</comment>
<comment type="subcellular location">
    <subcellularLocation>
        <location evidence="1">Mitochondrion matrix</location>
    </subcellularLocation>
</comment>
<comment type="similarity">
    <text evidence="1">Belongs to the SDHAF2 family.</text>
</comment>
<organism>
    <name type="scientific">Drosophila virilis</name>
    <name type="common">Fruit fly</name>
    <dbReference type="NCBI Taxonomy" id="7244"/>
    <lineage>
        <taxon>Eukaryota</taxon>
        <taxon>Metazoa</taxon>
        <taxon>Ecdysozoa</taxon>
        <taxon>Arthropoda</taxon>
        <taxon>Hexapoda</taxon>
        <taxon>Insecta</taxon>
        <taxon>Pterygota</taxon>
        <taxon>Neoptera</taxon>
        <taxon>Endopterygota</taxon>
        <taxon>Diptera</taxon>
        <taxon>Brachycera</taxon>
        <taxon>Muscomorpha</taxon>
        <taxon>Ephydroidea</taxon>
        <taxon>Drosophilidae</taxon>
        <taxon>Drosophila</taxon>
    </lineage>
</organism>
<reference key="1">
    <citation type="journal article" date="2007" name="Nature">
        <title>Evolution of genes and genomes on the Drosophila phylogeny.</title>
        <authorList>
            <consortium name="Drosophila 12 genomes consortium"/>
        </authorList>
    </citation>
    <scope>NUCLEOTIDE SEQUENCE [LARGE SCALE GENOMIC DNA]</scope>
    <source>
        <strain>Tucson 15010-1051.87</strain>
    </source>
</reference>
<proteinExistence type="inferred from homology"/>
<gene>
    <name type="ORF">GJ20144</name>
</gene>
<keyword id="KW-0143">Chaperone</keyword>
<keyword id="KW-0496">Mitochondrion</keyword>
<keyword id="KW-1185">Reference proteome</keyword>
<keyword id="KW-0809">Transit peptide</keyword>
<dbReference type="EMBL" id="CH940648">
    <property type="protein sequence ID" value="EDW61736.1"/>
    <property type="molecule type" value="Genomic_DNA"/>
</dbReference>
<dbReference type="SMR" id="B4LKE5"/>
<dbReference type="FunCoup" id="B4LKE5">
    <property type="interactions" value="1266"/>
</dbReference>
<dbReference type="STRING" id="7244.B4LKE5"/>
<dbReference type="EnsemblMetazoa" id="FBtr0443658">
    <property type="protein sequence ID" value="FBpp0400038"/>
    <property type="gene ID" value="FBgn0207284"/>
</dbReference>
<dbReference type="EnsemblMetazoa" id="XM_002050507.3">
    <property type="protein sequence ID" value="XP_002050543.2"/>
    <property type="gene ID" value="LOC6625541"/>
</dbReference>
<dbReference type="GeneID" id="6625541"/>
<dbReference type="KEGG" id="dvi:6625541"/>
<dbReference type="eggNOG" id="KOG3326">
    <property type="taxonomic scope" value="Eukaryota"/>
</dbReference>
<dbReference type="HOGENOM" id="CLU_103054_0_3_1"/>
<dbReference type="InParanoid" id="B4LKE5"/>
<dbReference type="OMA" id="YGKPQNP"/>
<dbReference type="OrthoDB" id="284292at2759"/>
<dbReference type="PhylomeDB" id="B4LKE5"/>
<dbReference type="Proteomes" id="UP000008792">
    <property type="component" value="Unassembled WGS sequence"/>
</dbReference>
<dbReference type="GO" id="GO:0005759">
    <property type="term" value="C:mitochondrial matrix"/>
    <property type="evidence" value="ECO:0007669"/>
    <property type="project" value="UniProtKB-SubCell"/>
</dbReference>
<dbReference type="GO" id="GO:0005739">
    <property type="term" value="C:mitochondrion"/>
    <property type="evidence" value="ECO:0000250"/>
    <property type="project" value="UniProtKB"/>
</dbReference>
<dbReference type="GO" id="GO:0006121">
    <property type="term" value="P:mitochondrial electron transport, succinate to ubiquinone"/>
    <property type="evidence" value="ECO:0000250"/>
    <property type="project" value="UniProtKB"/>
</dbReference>
<dbReference type="GO" id="GO:0034553">
    <property type="term" value="P:mitochondrial respiratory chain complex II assembly"/>
    <property type="evidence" value="ECO:0007669"/>
    <property type="project" value="TreeGrafter"/>
</dbReference>
<dbReference type="GO" id="GO:0018293">
    <property type="term" value="P:protein-FAD linkage"/>
    <property type="evidence" value="ECO:0000250"/>
    <property type="project" value="UniProtKB"/>
</dbReference>
<dbReference type="GO" id="GO:0006099">
    <property type="term" value="P:tricarboxylic acid cycle"/>
    <property type="evidence" value="ECO:0007669"/>
    <property type="project" value="TreeGrafter"/>
</dbReference>
<dbReference type="FunFam" id="1.10.150.250:FF:000002">
    <property type="entry name" value="Succinate dehydrogenase assembly factor 2, mitochondrial"/>
    <property type="match status" value="1"/>
</dbReference>
<dbReference type="Gene3D" id="1.10.150.250">
    <property type="entry name" value="Flavinator of succinate dehydrogenase"/>
    <property type="match status" value="1"/>
</dbReference>
<dbReference type="HAMAP" id="MF_03057">
    <property type="entry name" value="SDHAF2"/>
    <property type="match status" value="1"/>
</dbReference>
<dbReference type="InterPro" id="IPR005631">
    <property type="entry name" value="SDH"/>
</dbReference>
<dbReference type="InterPro" id="IPR036714">
    <property type="entry name" value="SDH_sf"/>
</dbReference>
<dbReference type="InterPro" id="IPR028882">
    <property type="entry name" value="SDHAF2"/>
</dbReference>
<dbReference type="PANTHER" id="PTHR12469">
    <property type="entry name" value="PROTEIN EMI5 HOMOLOG, MITOCHONDRIAL"/>
    <property type="match status" value="1"/>
</dbReference>
<dbReference type="PANTHER" id="PTHR12469:SF2">
    <property type="entry name" value="SUCCINATE DEHYDROGENASE ASSEMBLY FACTOR 2, MITOCHONDRIAL"/>
    <property type="match status" value="1"/>
</dbReference>
<dbReference type="Pfam" id="PF03937">
    <property type="entry name" value="Sdh5"/>
    <property type="match status" value="1"/>
</dbReference>
<dbReference type="SUPFAM" id="SSF109910">
    <property type="entry name" value="YgfY-like"/>
    <property type="match status" value="1"/>
</dbReference>
<sequence>MLRQLLATARRLLLPLATPKRCLSSKPNGLDKSEYSTPPEVIDYEDPEGLPVPEYPVRPDEPLATRKQRLLYQSRKRGMLENDLLLSTFVAKYLKDFDEDETALYDKLINGVSNDWDIYYWATETKPTPPEYDTDIMKLLKQHVKNTERVQRIRQPDL</sequence>
<name>SDHF2_DROVI</name>
<evidence type="ECO:0000255" key="1">
    <source>
        <dbReference type="HAMAP-Rule" id="MF_03057"/>
    </source>
</evidence>
<accession>B4LKE5</accession>
<feature type="transit peptide" description="Mitochondrion" evidence="1">
    <location>
        <begin position="1"/>
        <end position="23"/>
    </location>
</feature>
<feature type="chain" id="PRO_0000383179" description="Succinate dehydrogenase assembly factor 2, mitochondrial">
    <location>
        <begin position="24"/>
        <end position="158"/>
    </location>
</feature>